<evidence type="ECO:0000255" key="1">
    <source>
        <dbReference type="HAMAP-Rule" id="MF_00502"/>
    </source>
</evidence>
<evidence type="ECO:0000305" key="2"/>
<comment type="subunit">
    <text evidence="1">Part of the 50S ribosomal subunit.</text>
</comment>
<comment type="similarity">
    <text evidence="1">Belongs to the bacterial ribosomal protein bL31 family. Type B subfamily.</text>
</comment>
<feature type="chain" id="PRO_0000173199" description="Large ribosomal subunit protein bL31B">
    <location>
        <begin position="1"/>
        <end position="83"/>
    </location>
</feature>
<dbReference type="EMBL" id="AP006841">
    <property type="protein sequence ID" value="BAD50045.1"/>
    <property type="molecule type" value="Genomic_DNA"/>
</dbReference>
<dbReference type="RefSeq" id="WP_005789565.1">
    <property type="nucleotide sequence ID" value="NZ_UYXF01000022.1"/>
</dbReference>
<dbReference type="RefSeq" id="YP_100579.1">
    <property type="nucleotide sequence ID" value="NC_006347.1"/>
</dbReference>
<dbReference type="SMR" id="Q64R36"/>
<dbReference type="STRING" id="295405.BF3301"/>
<dbReference type="KEGG" id="bfr:BF3301"/>
<dbReference type="PATRIC" id="fig|295405.11.peg.3172"/>
<dbReference type="HOGENOM" id="CLU_114306_2_2_10"/>
<dbReference type="OrthoDB" id="9803251at2"/>
<dbReference type="Proteomes" id="UP000002197">
    <property type="component" value="Chromosome"/>
</dbReference>
<dbReference type="GO" id="GO:1990904">
    <property type="term" value="C:ribonucleoprotein complex"/>
    <property type="evidence" value="ECO:0007669"/>
    <property type="project" value="UniProtKB-KW"/>
</dbReference>
<dbReference type="GO" id="GO:0005840">
    <property type="term" value="C:ribosome"/>
    <property type="evidence" value="ECO:0007669"/>
    <property type="project" value="UniProtKB-KW"/>
</dbReference>
<dbReference type="GO" id="GO:0003735">
    <property type="term" value="F:structural constituent of ribosome"/>
    <property type="evidence" value="ECO:0007669"/>
    <property type="project" value="InterPro"/>
</dbReference>
<dbReference type="GO" id="GO:0006412">
    <property type="term" value="P:translation"/>
    <property type="evidence" value="ECO:0007669"/>
    <property type="project" value="UniProtKB-UniRule"/>
</dbReference>
<dbReference type="Gene3D" id="4.10.830.30">
    <property type="entry name" value="Ribosomal protein L31"/>
    <property type="match status" value="1"/>
</dbReference>
<dbReference type="HAMAP" id="MF_00502">
    <property type="entry name" value="Ribosomal_bL31_2"/>
    <property type="match status" value="1"/>
</dbReference>
<dbReference type="InterPro" id="IPR034704">
    <property type="entry name" value="Ribosomal_bL28/bL31-like_sf"/>
</dbReference>
<dbReference type="InterPro" id="IPR002150">
    <property type="entry name" value="Ribosomal_bL31"/>
</dbReference>
<dbReference type="InterPro" id="IPR027493">
    <property type="entry name" value="Ribosomal_bL31_B"/>
</dbReference>
<dbReference type="InterPro" id="IPR042105">
    <property type="entry name" value="Ribosomal_bL31_sf"/>
</dbReference>
<dbReference type="NCBIfam" id="TIGR00105">
    <property type="entry name" value="L31"/>
    <property type="match status" value="1"/>
</dbReference>
<dbReference type="NCBIfam" id="NF002462">
    <property type="entry name" value="PRK01678.1"/>
    <property type="match status" value="1"/>
</dbReference>
<dbReference type="PANTHER" id="PTHR33280">
    <property type="entry name" value="50S RIBOSOMAL PROTEIN L31, CHLOROPLASTIC"/>
    <property type="match status" value="1"/>
</dbReference>
<dbReference type="PANTHER" id="PTHR33280:SF1">
    <property type="entry name" value="LARGE RIBOSOMAL SUBUNIT PROTEIN BL31C"/>
    <property type="match status" value="1"/>
</dbReference>
<dbReference type="Pfam" id="PF01197">
    <property type="entry name" value="Ribosomal_L31"/>
    <property type="match status" value="1"/>
</dbReference>
<dbReference type="PRINTS" id="PR01249">
    <property type="entry name" value="RIBOSOMALL31"/>
</dbReference>
<dbReference type="SUPFAM" id="SSF143800">
    <property type="entry name" value="L28p-like"/>
    <property type="match status" value="1"/>
</dbReference>
<dbReference type="PROSITE" id="PS01143">
    <property type="entry name" value="RIBOSOMAL_L31"/>
    <property type="match status" value="1"/>
</dbReference>
<reference key="1">
    <citation type="journal article" date="2004" name="Proc. Natl. Acad. Sci. U.S.A.">
        <title>Genomic analysis of Bacteroides fragilis reveals extensive DNA inversions regulating cell surface adaptation.</title>
        <authorList>
            <person name="Kuwahara T."/>
            <person name="Yamashita A."/>
            <person name="Hirakawa H."/>
            <person name="Nakayama H."/>
            <person name="Toh H."/>
            <person name="Okada N."/>
            <person name="Kuhara S."/>
            <person name="Hattori M."/>
            <person name="Hayashi T."/>
            <person name="Ohnishi Y."/>
        </authorList>
    </citation>
    <scope>NUCLEOTIDE SEQUENCE [LARGE SCALE GENOMIC DNA]</scope>
    <source>
        <strain>YCH46</strain>
    </source>
</reference>
<sequence>MKKGLHPESYRPVVFKDMSNGDMFLSKSTVATKETIEFEGETYPLLKIEISNTSHPFYTGKSTLVDTAGRVDKFMSRYGNRKK</sequence>
<accession>Q64R36</accession>
<name>RL31B_BACFR</name>
<protein>
    <recommendedName>
        <fullName evidence="1">Large ribosomal subunit protein bL31B</fullName>
    </recommendedName>
    <alternativeName>
        <fullName evidence="2">50S ribosomal protein L31 type B</fullName>
    </alternativeName>
</protein>
<organism>
    <name type="scientific">Bacteroides fragilis (strain YCH46)</name>
    <dbReference type="NCBI Taxonomy" id="295405"/>
    <lineage>
        <taxon>Bacteria</taxon>
        <taxon>Pseudomonadati</taxon>
        <taxon>Bacteroidota</taxon>
        <taxon>Bacteroidia</taxon>
        <taxon>Bacteroidales</taxon>
        <taxon>Bacteroidaceae</taxon>
        <taxon>Bacteroides</taxon>
    </lineage>
</organism>
<proteinExistence type="inferred from homology"/>
<gene>
    <name evidence="1" type="primary">rpmE2</name>
    <name type="ordered locus">BF3301</name>
</gene>
<keyword id="KW-0687">Ribonucleoprotein</keyword>
<keyword id="KW-0689">Ribosomal protein</keyword>